<keyword id="KW-0028">Amino-acid biosynthesis</keyword>
<keyword id="KW-0055">Arginine biosynthesis</keyword>
<keyword id="KW-0067">ATP-binding</keyword>
<keyword id="KW-0436">Ligase</keyword>
<keyword id="KW-0460">Magnesium</keyword>
<keyword id="KW-0464">Manganese</keyword>
<keyword id="KW-0479">Metal-binding</keyword>
<keyword id="KW-0547">Nucleotide-binding</keyword>
<keyword id="KW-0665">Pyrimidine biosynthesis</keyword>
<keyword id="KW-0677">Repeat</keyword>
<feature type="chain" id="PRO_1000066385" description="Carbamoyl phosphate synthase large chain">
    <location>
        <begin position="1"/>
        <end position="1058"/>
    </location>
</feature>
<feature type="domain" description="ATP-grasp 1" evidence="1">
    <location>
        <begin position="133"/>
        <end position="327"/>
    </location>
</feature>
<feature type="domain" description="ATP-grasp 2" evidence="1">
    <location>
        <begin position="671"/>
        <end position="861"/>
    </location>
</feature>
<feature type="domain" description="MGS-like" evidence="1">
    <location>
        <begin position="930"/>
        <end position="1058"/>
    </location>
</feature>
<feature type="region of interest" description="Carboxyphosphate synthetic domain" evidence="1">
    <location>
        <begin position="1"/>
        <end position="401"/>
    </location>
</feature>
<feature type="region of interest" description="Oligomerization domain" evidence="1">
    <location>
        <begin position="402"/>
        <end position="546"/>
    </location>
</feature>
<feature type="region of interest" description="Carbamoyl phosphate synthetic domain" evidence="1">
    <location>
        <begin position="547"/>
        <end position="929"/>
    </location>
</feature>
<feature type="region of interest" description="Allosteric domain" evidence="1">
    <location>
        <begin position="930"/>
        <end position="1058"/>
    </location>
</feature>
<feature type="binding site" evidence="1">
    <location>
        <position position="129"/>
    </location>
    <ligand>
        <name>ATP</name>
        <dbReference type="ChEBI" id="CHEBI:30616"/>
        <label>1</label>
    </ligand>
</feature>
<feature type="binding site" evidence="1">
    <location>
        <position position="169"/>
    </location>
    <ligand>
        <name>ATP</name>
        <dbReference type="ChEBI" id="CHEBI:30616"/>
        <label>1</label>
    </ligand>
</feature>
<feature type="binding site" evidence="1">
    <location>
        <position position="175"/>
    </location>
    <ligand>
        <name>ATP</name>
        <dbReference type="ChEBI" id="CHEBI:30616"/>
        <label>1</label>
    </ligand>
</feature>
<feature type="binding site" evidence="1">
    <location>
        <position position="176"/>
    </location>
    <ligand>
        <name>ATP</name>
        <dbReference type="ChEBI" id="CHEBI:30616"/>
        <label>1</label>
    </ligand>
</feature>
<feature type="binding site" evidence="1">
    <location>
        <position position="208"/>
    </location>
    <ligand>
        <name>ATP</name>
        <dbReference type="ChEBI" id="CHEBI:30616"/>
        <label>1</label>
    </ligand>
</feature>
<feature type="binding site" evidence="1">
    <location>
        <position position="210"/>
    </location>
    <ligand>
        <name>ATP</name>
        <dbReference type="ChEBI" id="CHEBI:30616"/>
        <label>1</label>
    </ligand>
</feature>
<feature type="binding site" evidence="1">
    <location>
        <position position="215"/>
    </location>
    <ligand>
        <name>ATP</name>
        <dbReference type="ChEBI" id="CHEBI:30616"/>
        <label>1</label>
    </ligand>
</feature>
<feature type="binding site" evidence="1">
    <location>
        <position position="241"/>
    </location>
    <ligand>
        <name>ATP</name>
        <dbReference type="ChEBI" id="CHEBI:30616"/>
        <label>1</label>
    </ligand>
</feature>
<feature type="binding site" evidence="1">
    <location>
        <position position="242"/>
    </location>
    <ligand>
        <name>ATP</name>
        <dbReference type="ChEBI" id="CHEBI:30616"/>
        <label>1</label>
    </ligand>
</feature>
<feature type="binding site" evidence="1">
    <location>
        <position position="243"/>
    </location>
    <ligand>
        <name>ATP</name>
        <dbReference type="ChEBI" id="CHEBI:30616"/>
        <label>1</label>
    </ligand>
</feature>
<feature type="binding site" evidence="1">
    <location>
        <position position="284"/>
    </location>
    <ligand>
        <name>ATP</name>
        <dbReference type="ChEBI" id="CHEBI:30616"/>
        <label>1</label>
    </ligand>
</feature>
<feature type="binding site" evidence="1">
    <location>
        <position position="284"/>
    </location>
    <ligand>
        <name>Mg(2+)</name>
        <dbReference type="ChEBI" id="CHEBI:18420"/>
        <label>1</label>
    </ligand>
</feature>
<feature type="binding site" evidence="1">
    <location>
        <position position="284"/>
    </location>
    <ligand>
        <name>Mn(2+)</name>
        <dbReference type="ChEBI" id="CHEBI:29035"/>
        <label>1</label>
    </ligand>
</feature>
<feature type="binding site" evidence="1">
    <location>
        <position position="298"/>
    </location>
    <ligand>
        <name>ATP</name>
        <dbReference type="ChEBI" id="CHEBI:30616"/>
        <label>1</label>
    </ligand>
</feature>
<feature type="binding site" evidence="1">
    <location>
        <position position="298"/>
    </location>
    <ligand>
        <name>Mg(2+)</name>
        <dbReference type="ChEBI" id="CHEBI:18420"/>
        <label>1</label>
    </ligand>
</feature>
<feature type="binding site" evidence="1">
    <location>
        <position position="298"/>
    </location>
    <ligand>
        <name>Mg(2+)</name>
        <dbReference type="ChEBI" id="CHEBI:18420"/>
        <label>2</label>
    </ligand>
</feature>
<feature type="binding site" evidence="1">
    <location>
        <position position="298"/>
    </location>
    <ligand>
        <name>Mn(2+)</name>
        <dbReference type="ChEBI" id="CHEBI:29035"/>
        <label>1</label>
    </ligand>
</feature>
<feature type="binding site" evidence="1">
    <location>
        <position position="298"/>
    </location>
    <ligand>
        <name>Mn(2+)</name>
        <dbReference type="ChEBI" id="CHEBI:29035"/>
        <label>2</label>
    </ligand>
</feature>
<feature type="binding site" evidence="1">
    <location>
        <position position="300"/>
    </location>
    <ligand>
        <name>Mg(2+)</name>
        <dbReference type="ChEBI" id="CHEBI:18420"/>
        <label>2</label>
    </ligand>
</feature>
<feature type="binding site" evidence="1">
    <location>
        <position position="300"/>
    </location>
    <ligand>
        <name>Mn(2+)</name>
        <dbReference type="ChEBI" id="CHEBI:29035"/>
        <label>2</label>
    </ligand>
</feature>
<feature type="binding site" evidence="1">
    <location>
        <position position="707"/>
    </location>
    <ligand>
        <name>ATP</name>
        <dbReference type="ChEBI" id="CHEBI:30616"/>
        <label>2</label>
    </ligand>
</feature>
<feature type="binding site" evidence="1">
    <location>
        <position position="746"/>
    </location>
    <ligand>
        <name>ATP</name>
        <dbReference type="ChEBI" id="CHEBI:30616"/>
        <label>2</label>
    </ligand>
</feature>
<feature type="binding site" evidence="1">
    <location>
        <position position="748"/>
    </location>
    <ligand>
        <name>ATP</name>
        <dbReference type="ChEBI" id="CHEBI:30616"/>
        <label>2</label>
    </ligand>
</feature>
<feature type="binding site" evidence="1">
    <location>
        <position position="752"/>
    </location>
    <ligand>
        <name>ATP</name>
        <dbReference type="ChEBI" id="CHEBI:30616"/>
        <label>2</label>
    </ligand>
</feature>
<feature type="binding site" evidence="1">
    <location>
        <position position="777"/>
    </location>
    <ligand>
        <name>ATP</name>
        <dbReference type="ChEBI" id="CHEBI:30616"/>
        <label>2</label>
    </ligand>
</feature>
<feature type="binding site" evidence="1">
    <location>
        <position position="778"/>
    </location>
    <ligand>
        <name>ATP</name>
        <dbReference type="ChEBI" id="CHEBI:30616"/>
        <label>2</label>
    </ligand>
</feature>
<feature type="binding site" evidence="1">
    <location>
        <position position="779"/>
    </location>
    <ligand>
        <name>ATP</name>
        <dbReference type="ChEBI" id="CHEBI:30616"/>
        <label>2</label>
    </ligand>
</feature>
<feature type="binding site" evidence="1">
    <location>
        <position position="780"/>
    </location>
    <ligand>
        <name>ATP</name>
        <dbReference type="ChEBI" id="CHEBI:30616"/>
        <label>2</label>
    </ligand>
</feature>
<feature type="binding site" evidence="1">
    <location>
        <position position="820"/>
    </location>
    <ligand>
        <name>ATP</name>
        <dbReference type="ChEBI" id="CHEBI:30616"/>
        <label>2</label>
    </ligand>
</feature>
<feature type="binding site" evidence="1">
    <location>
        <position position="820"/>
    </location>
    <ligand>
        <name>Mg(2+)</name>
        <dbReference type="ChEBI" id="CHEBI:18420"/>
        <label>3</label>
    </ligand>
</feature>
<feature type="binding site" evidence="1">
    <location>
        <position position="820"/>
    </location>
    <ligand>
        <name>Mn(2+)</name>
        <dbReference type="ChEBI" id="CHEBI:29035"/>
        <label>3</label>
    </ligand>
</feature>
<feature type="binding site" evidence="1">
    <location>
        <position position="832"/>
    </location>
    <ligand>
        <name>ATP</name>
        <dbReference type="ChEBI" id="CHEBI:30616"/>
        <label>2</label>
    </ligand>
</feature>
<feature type="binding site" evidence="1">
    <location>
        <position position="832"/>
    </location>
    <ligand>
        <name>Mg(2+)</name>
        <dbReference type="ChEBI" id="CHEBI:18420"/>
        <label>3</label>
    </ligand>
</feature>
<feature type="binding site" evidence="1">
    <location>
        <position position="832"/>
    </location>
    <ligand>
        <name>Mg(2+)</name>
        <dbReference type="ChEBI" id="CHEBI:18420"/>
        <label>4</label>
    </ligand>
</feature>
<feature type="binding site" evidence="1">
    <location>
        <position position="832"/>
    </location>
    <ligand>
        <name>Mn(2+)</name>
        <dbReference type="ChEBI" id="CHEBI:29035"/>
        <label>3</label>
    </ligand>
</feature>
<feature type="binding site" evidence="1">
    <location>
        <position position="832"/>
    </location>
    <ligand>
        <name>Mn(2+)</name>
        <dbReference type="ChEBI" id="CHEBI:29035"/>
        <label>4</label>
    </ligand>
</feature>
<feature type="binding site" evidence="1">
    <location>
        <position position="834"/>
    </location>
    <ligand>
        <name>Mg(2+)</name>
        <dbReference type="ChEBI" id="CHEBI:18420"/>
        <label>4</label>
    </ligand>
</feature>
<feature type="binding site" evidence="1">
    <location>
        <position position="834"/>
    </location>
    <ligand>
        <name>Mn(2+)</name>
        <dbReference type="ChEBI" id="CHEBI:29035"/>
        <label>4</label>
    </ligand>
</feature>
<reference key="1">
    <citation type="journal article" date="2007" name="J. Bacteriol.">
        <title>Complete genome of acute rheumatic fever-associated serotype M5 Streptococcus pyogenes strain Manfredo.</title>
        <authorList>
            <person name="Holden M.T.G."/>
            <person name="Scott A."/>
            <person name="Cherevach I."/>
            <person name="Chillingworth T."/>
            <person name="Churcher C."/>
            <person name="Cronin A."/>
            <person name="Dowd L."/>
            <person name="Feltwell T."/>
            <person name="Hamlin N."/>
            <person name="Holroyd S."/>
            <person name="Jagels K."/>
            <person name="Moule S."/>
            <person name="Mungall K."/>
            <person name="Quail M.A."/>
            <person name="Price C."/>
            <person name="Rabbinowitsch E."/>
            <person name="Sharp S."/>
            <person name="Skelton J."/>
            <person name="Whitehead S."/>
            <person name="Barrell B.G."/>
            <person name="Kehoe M."/>
            <person name="Parkhill J."/>
        </authorList>
    </citation>
    <scope>NUCLEOTIDE SEQUENCE [LARGE SCALE GENOMIC DNA]</scope>
    <source>
        <strain>Manfredo</strain>
    </source>
</reference>
<comment type="function">
    <text evidence="1">Large subunit of the glutamine-dependent carbamoyl phosphate synthetase (CPSase). CPSase catalyzes the formation of carbamoyl phosphate from the ammonia moiety of glutamine, carbonate, and phosphate donated by ATP, constituting the first step of 2 biosynthetic pathways, one leading to arginine and/or urea and the other to pyrimidine nucleotides. The large subunit (synthetase) binds the substrates ammonia (free or transferred from glutamine from the small subunit), hydrogencarbonate and ATP and carries out an ATP-coupled ligase reaction, activating hydrogencarbonate by forming carboxy phosphate which reacts with ammonia to form carbamoyl phosphate.</text>
</comment>
<comment type="catalytic activity">
    <reaction evidence="1">
        <text>hydrogencarbonate + L-glutamine + 2 ATP + H2O = carbamoyl phosphate + L-glutamate + 2 ADP + phosphate + 2 H(+)</text>
        <dbReference type="Rhea" id="RHEA:18633"/>
        <dbReference type="ChEBI" id="CHEBI:15377"/>
        <dbReference type="ChEBI" id="CHEBI:15378"/>
        <dbReference type="ChEBI" id="CHEBI:17544"/>
        <dbReference type="ChEBI" id="CHEBI:29985"/>
        <dbReference type="ChEBI" id="CHEBI:30616"/>
        <dbReference type="ChEBI" id="CHEBI:43474"/>
        <dbReference type="ChEBI" id="CHEBI:58228"/>
        <dbReference type="ChEBI" id="CHEBI:58359"/>
        <dbReference type="ChEBI" id="CHEBI:456216"/>
        <dbReference type="EC" id="6.3.5.5"/>
    </reaction>
</comment>
<comment type="catalytic activity">
    <molecule>Carbamoyl phosphate synthase large chain</molecule>
    <reaction evidence="1">
        <text>hydrogencarbonate + NH4(+) + 2 ATP = carbamoyl phosphate + 2 ADP + phosphate + 2 H(+)</text>
        <dbReference type="Rhea" id="RHEA:18029"/>
        <dbReference type="ChEBI" id="CHEBI:15378"/>
        <dbReference type="ChEBI" id="CHEBI:17544"/>
        <dbReference type="ChEBI" id="CHEBI:28938"/>
        <dbReference type="ChEBI" id="CHEBI:30616"/>
        <dbReference type="ChEBI" id="CHEBI:43474"/>
        <dbReference type="ChEBI" id="CHEBI:58228"/>
        <dbReference type="ChEBI" id="CHEBI:456216"/>
        <dbReference type="EC" id="6.3.4.16"/>
    </reaction>
</comment>
<comment type="cofactor">
    <cofactor evidence="1">
        <name>Mg(2+)</name>
        <dbReference type="ChEBI" id="CHEBI:18420"/>
    </cofactor>
    <cofactor evidence="1">
        <name>Mn(2+)</name>
        <dbReference type="ChEBI" id="CHEBI:29035"/>
    </cofactor>
    <text evidence="1">Binds 4 Mg(2+) or Mn(2+) ions per subunit.</text>
</comment>
<comment type="pathway">
    <text evidence="1">Amino-acid biosynthesis; L-arginine biosynthesis; carbamoyl phosphate from bicarbonate: step 1/1.</text>
</comment>
<comment type="pathway">
    <text evidence="1">Pyrimidine metabolism; UMP biosynthesis via de novo pathway; (S)-dihydroorotate from bicarbonate: step 1/3.</text>
</comment>
<comment type="subunit">
    <text evidence="1">Composed of two chains; the small (or glutamine) chain promotes the hydrolysis of glutamine to ammonia, which is used by the large (or ammonia) chain to synthesize carbamoyl phosphate. Tetramer of heterodimers (alpha,beta)4.</text>
</comment>
<comment type="domain">
    <text evidence="1">The large subunit is composed of 2 ATP-grasp domains that are involved in binding the 2 ATP molecules needed for carbamoyl phosphate synthesis. The N-terminal ATP-grasp domain (referred to as the carboxyphosphate synthetic component) catalyzes the ATP-dependent phosphorylation of hydrogencarbonate to carboxyphosphate and the subsequent nucleophilic attack by ammonia to form a carbamate intermediate. The C-terminal ATP-grasp domain (referred to as the carbamoyl phosphate synthetic component) then catalyzes the phosphorylation of carbamate with the second ATP to form the end product carbamoyl phosphate. The reactive and unstable enzyme intermediates are sequentially channeled from one active site to the next through the interior of the protein over a distance of at least 96 A.</text>
</comment>
<comment type="similarity">
    <text evidence="1">Belongs to the CarB family.</text>
</comment>
<gene>
    <name evidence="1" type="primary">carB</name>
    <name type="ordered locus">SpyM51164</name>
</gene>
<accession>A2RF60</accession>
<proteinExistence type="inferred from homology"/>
<name>CARB_STRPG</name>
<evidence type="ECO:0000255" key="1">
    <source>
        <dbReference type="HAMAP-Rule" id="MF_01210"/>
    </source>
</evidence>
<organism>
    <name type="scientific">Streptococcus pyogenes serotype M5 (strain Manfredo)</name>
    <dbReference type="NCBI Taxonomy" id="160491"/>
    <lineage>
        <taxon>Bacteria</taxon>
        <taxon>Bacillati</taxon>
        <taxon>Bacillota</taxon>
        <taxon>Bacilli</taxon>
        <taxon>Lactobacillales</taxon>
        <taxon>Streptococcaceae</taxon>
        <taxon>Streptococcus</taxon>
    </lineage>
</organism>
<protein>
    <recommendedName>
        <fullName evidence="1">Carbamoyl phosphate synthase large chain</fullName>
        <ecNumber evidence="1">6.3.4.16</ecNumber>
        <ecNumber evidence="1">6.3.5.5</ecNumber>
    </recommendedName>
    <alternativeName>
        <fullName evidence="1">Carbamoyl phosphate synthetase ammonia chain</fullName>
    </alternativeName>
</protein>
<dbReference type="EC" id="6.3.4.16" evidence="1"/>
<dbReference type="EC" id="6.3.5.5" evidence="1"/>
<dbReference type="EMBL" id="AM295007">
    <property type="protein sequence ID" value="CAM30489.1"/>
    <property type="molecule type" value="Genomic_DNA"/>
</dbReference>
<dbReference type="RefSeq" id="WP_011888993.1">
    <property type="nucleotide sequence ID" value="NC_009332.1"/>
</dbReference>
<dbReference type="SMR" id="A2RF60"/>
<dbReference type="KEGG" id="spf:SpyM51164"/>
<dbReference type="HOGENOM" id="CLU_000513_1_2_9"/>
<dbReference type="UniPathway" id="UPA00068">
    <property type="reaction ID" value="UER00171"/>
</dbReference>
<dbReference type="UniPathway" id="UPA00070">
    <property type="reaction ID" value="UER00115"/>
</dbReference>
<dbReference type="GO" id="GO:0005737">
    <property type="term" value="C:cytoplasm"/>
    <property type="evidence" value="ECO:0007669"/>
    <property type="project" value="TreeGrafter"/>
</dbReference>
<dbReference type="GO" id="GO:0005524">
    <property type="term" value="F:ATP binding"/>
    <property type="evidence" value="ECO:0007669"/>
    <property type="project" value="UniProtKB-UniRule"/>
</dbReference>
<dbReference type="GO" id="GO:0004087">
    <property type="term" value="F:carbamoyl-phosphate synthase (ammonia) activity"/>
    <property type="evidence" value="ECO:0007669"/>
    <property type="project" value="RHEA"/>
</dbReference>
<dbReference type="GO" id="GO:0004088">
    <property type="term" value="F:carbamoyl-phosphate synthase (glutamine-hydrolyzing) activity"/>
    <property type="evidence" value="ECO:0007669"/>
    <property type="project" value="UniProtKB-UniRule"/>
</dbReference>
<dbReference type="GO" id="GO:0046872">
    <property type="term" value="F:metal ion binding"/>
    <property type="evidence" value="ECO:0007669"/>
    <property type="project" value="UniProtKB-KW"/>
</dbReference>
<dbReference type="GO" id="GO:0044205">
    <property type="term" value="P:'de novo' UMP biosynthetic process"/>
    <property type="evidence" value="ECO:0007669"/>
    <property type="project" value="UniProtKB-UniRule"/>
</dbReference>
<dbReference type="GO" id="GO:0006541">
    <property type="term" value="P:glutamine metabolic process"/>
    <property type="evidence" value="ECO:0007669"/>
    <property type="project" value="TreeGrafter"/>
</dbReference>
<dbReference type="GO" id="GO:0006526">
    <property type="term" value="P:L-arginine biosynthetic process"/>
    <property type="evidence" value="ECO:0007669"/>
    <property type="project" value="UniProtKB-UniRule"/>
</dbReference>
<dbReference type="CDD" id="cd01424">
    <property type="entry name" value="MGS_CPS_II"/>
    <property type="match status" value="1"/>
</dbReference>
<dbReference type="FunFam" id="1.10.1030.10:FF:000002">
    <property type="entry name" value="Carbamoyl-phosphate synthase large chain"/>
    <property type="match status" value="1"/>
</dbReference>
<dbReference type="FunFam" id="3.30.1490.20:FF:000001">
    <property type="entry name" value="Carbamoyl-phosphate synthase large chain"/>
    <property type="match status" value="1"/>
</dbReference>
<dbReference type="FunFam" id="3.30.470.20:FF:000001">
    <property type="entry name" value="Carbamoyl-phosphate synthase large chain"/>
    <property type="match status" value="1"/>
</dbReference>
<dbReference type="FunFam" id="3.30.470.20:FF:000026">
    <property type="entry name" value="Carbamoyl-phosphate synthase large chain"/>
    <property type="match status" value="1"/>
</dbReference>
<dbReference type="FunFam" id="3.40.50.20:FF:000001">
    <property type="entry name" value="Carbamoyl-phosphate synthase large chain"/>
    <property type="match status" value="2"/>
</dbReference>
<dbReference type="Gene3D" id="3.40.50.20">
    <property type="match status" value="2"/>
</dbReference>
<dbReference type="Gene3D" id="3.30.1490.20">
    <property type="entry name" value="ATP-grasp fold, A domain"/>
    <property type="match status" value="1"/>
</dbReference>
<dbReference type="Gene3D" id="3.30.470.20">
    <property type="entry name" value="ATP-grasp fold, B domain"/>
    <property type="match status" value="2"/>
</dbReference>
<dbReference type="Gene3D" id="1.10.1030.10">
    <property type="entry name" value="Carbamoyl-phosphate synthetase, large subunit oligomerisation domain"/>
    <property type="match status" value="1"/>
</dbReference>
<dbReference type="Gene3D" id="3.40.50.1380">
    <property type="entry name" value="Methylglyoxal synthase-like domain"/>
    <property type="match status" value="1"/>
</dbReference>
<dbReference type="HAMAP" id="MF_01210_A">
    <property type="entry name" value="CPSase_L_chain_A"/>
    <property type="match status" value="1"/>
</dbReference>
<dbReference type="HAMAP" id="MF_01210_B">
    <property type="entry name" value="CPSase_L_chain_B"/>
    <property type="match status" value="1"/>
</dbReference>
<dbReference type="InterPro" id="IPR011761">
    <property type="entry name" value="ATP-grasp"/>
</dbReference>
<dbReference type="InterPro" id="IPR013815">
    <property type="entry name" value="ATP_grasp_subdomain_1"/>
</dbReference>
<dbReference type="InterPro" id="IPR006275">
    <property type="entry name" value="CarbamoylP_synth_lsu"/>
</dbReference>
<dbReference type="InterPro" id="IPR005480">
    <property type="entry name" value="CarbamoylP_synth_lsu_oligo"/>
</dbReference>
<dbReference type="InterPro" id="IPR036897">
    <property type="entry name" value="CarbamoylP_synth_lsu_oligo_sf"/>
</dbReference>
<dbReference type="InterPro" id="IPR005479">
    <property type="entry name" value="CbamoylP_synth_lsu-like_ATP-bd"/>
</dbReference>
<dbReference type="InterPro" id="IPR005483">
    <property type="entry name" value="CbamoylP_synth_lsu_CPSase_dom"/>
</dbReference>
<dbReference type="InterPro" id="IPR011607">
    <property type="entry name" value="MGS-like_dom"/>
</dbReference>
<dbReference type="InterPro" id="IPR036914">
    <property type="entry name" value="MGS-like_dom_sf"/>
</dbReference>
<dbReference type="InterPro" id="IPR033937">
    <property type="entry name" value="MGS_CPS_CarB"/>
</dbReference>
<dbReference type="InterPro" id="IPR016185">
    <property type="entry name" value="PreATP-grasp_dom_sf"/>
</dbReference>
<dbReference type="NCBIfam" id="TIGR01369">
    <property type="entry name" value="CPSaseII_lrg"/>
    <property type="match status" value="1"/>
</dbReference>
<dbReference type="NCBIfam" id="NF003671">
    <property type="entry name" value="PRK05294.1"/>
    <property type="match status" value="1"/>
</dbReference>
<dbReference type="NCBIfam" id="NF009455">
    <property type="entry name" value="PRK12815.1"/>
    <property type="match status" value="1"/>
</dbReference>
<dbReference type="PANTHER" id="PTHR11405:SF53">
    <property type="entry name" value="CARBAMOYL-PHOSPHATE SYNTHASE [AMMONIA], MITOCHONDRIAL"/>
    <property type="match status" value="1"/>
</dbReference>
<dbReference type="PANTHER" id="PTHR11405">
    <property type="entry name" value="CARBAMOYLTRANSFERASE FAMILY MEMBER"/>
    <property type="match status" value="1"/>
</dbReference>
<dbReference type="Pfam" id="PF02786">
    <property type="entry name" value="CPSase_L_D2"/>
    <property type="match status" value="2"/>
</dbReference>
<dbReference type="Pfam" id="PF02787">
    <property type="entry name" value="CPSase_L_D3"/>
    <property type="match status" value="1"/>
</dbReference>
<dbReference type="Pfam" id="PF02142">
    <property type="entry name" value="MGS"/>
    <property type="match status" value="1"/>
</dbReference>
<dbReference type="PRINTS" id="PR00098">
    <property type="entry name" value="CPSASE"/>
</dbReference>
<dbReference type="SMART" id="SM01096">
    <property type="entry name" value="CPSase_L_D3"/>
    <property type="match status" value="1"/>
</dbReference>
<dbReference type="SMART" id="SM01209">
    <property type="entry name" value="GARS_A"/>
    <property type="match status" value="1"/>
</dbReference>
<dbReference type="SMART" id="SM00851">
    <property type="entry name" value="MGS"/>
    <property type="match status" value="1"/>
</dbReference>
<dbReference type="SUPFAM" id="SSF48108">
    <property type="entry name" value="Carbamoyl phosphate synthetase, large subunit connection domain"/>
    <property type="match status" value="1"/>
</dbReference>
<dbReference type="SUPFAM" id="SSF56059">
    <property type="entry name" value="Glutathione synthetase ATP-binding domain-like"/>
    <property type="match status" value="2"/>
</dbReference>
<dbReference type="SUPFAM" id="SSF52335">
    <property type="entry name" value="Methylglyoxal synthase-like"/>
    <property type="match status" value="1"/>
</dbReference>
<dbReference type="SUPFAM" id="SSF52440">
    <property type="entry name" value="PreATP-grasp domain"/>
    <property type="match status" value="2"/>
</dbReference>
<dbReference type="PROSITE" id="PS50975">
    <property type="entry name" value="ATP_GRASP"/>
    <property type="match status" value="2"/>
</dbReference>
<dbReference type="PROSITE" id="PS00866">
    <property type="entry name" value="CPSASE_1"/>
    <property type="match status" value="2"/>
</dbReference>
<dbReference type="PROSITE" id="PS00867">
    <property type="entry name" value="CPSASE_2"/>
    <property type="match status" value="2"/>
</dbReference>
<dbReference type="PROSITE" id="PS51855">
    <property type="entry name" value="MGS"/>
    <property type="match status" value="1"/>
</dbReference>
<sequence length="1058" mass="116512">MSKRKDIQKIMVIGSGPIIIGQAAEFDYAGTQACLALKEEGYKVILVNSNPATIMTDKEIADKVYIEPLTLEFVNRIIRKERPDAILPTLGGQTGLNMAMALSKAGILDDLEIELLGTKLSAIDQAEDRDLFKQLMQELDQPIPESTIVKTVDEAVTFARDIGYPVIVRPAFTLGGTGGGICSSEEELCEITENGLKLSPVTQCLIERSIAGFKEIEYEVMRDSADNALVVCNMENFDPVGIHTGDSIVFAPTQTLSDIENQMLRDASLKIIRALKIEGGCNVQLALDPYSFKYYVIEVNPRVSRSSALASKATGYPIAKLAAKIAVGLTLDEMTNPITGTTYAMFEPALDYVVAKIPRFPFDKFEHGERQLGTQMKATGEVMAIGRNLEESLLKACRSLEIGVCHNEMTSLSNISDEELVTKVIKAQDDRLFYLSEAIRRGYSIEELESLTKIDLFFLDKLLHIVEIEQELQMHVDHLESLKKAKRYGFSDQKIAEIWQKDESDIRAMRHSHSLYPVYKMVDTCAAEFDAKTPYFYSTYELENESVQSNKESILVLGSGPIRIGQGVEFDYATVHSVKAIQKAGYEAIIMNSNPETVSTDFSVSDKLYFEPLTFEDVMNVIDLEQPKGVIVQFGGQTAINLAQSLSDAGVTILGTQVEDLDRAEDRDLFEKALKELGIPQPQGQTATNEEEALEAAKKIGFPVLVRPSYVLGGRAMEIVENKEDLREYIRTAVKASPEHPILVDSYIFGKECEVDAISDGKSVLIPGIMEHIERAGVHSGDSMAVYPPQQLSKQIQETIAEYTKRLAIGLNCIGMMNVQFVIKNEQVYVIEVNPRASRTVPFLSKVTGIPMAQIATKLILGQTLKDLGYEDGLYPQSQLVHIKAPVFSFTKLAQVDSLLGPEMKSTGEVMGSDTSLEKALYKAFEANNSHLSEFGQIVFTIADDSKAEALSLARRFKAIGYQIMATQGTAAYFAEQGLSACLVGKIGDAANDIPTLVRHGHVQAIVNTVGIKRTADKDGQMIRSSAIEQGVPLFTALDTAKAMLTVLESRCFNIEAI</sequence>